<organism>
    <name type="scientific">Picrophilus torridus (strain ATCC 700027 / DSM 9790 / JCM 10055 / NBRC 100828 / KAW 2/3)</name>
    <dbReference type="NCBI Taxonomy" id="1122961"/>
    <lineage>
        <taxon>Archaea</taxon>
        <taxon>Methanobacteriati</taxon>
        <taxon>Thermoplasmatota</taxon>
        <taxon>Thermoplasmata</taxon>
        <taxon>Thermoplasmatales</taxon>
        <taxon>Picrophilaceae</taxon>
        <taxon>Picrophilus</taxon>
    </lineage>
</organism>
<accession>Q6L2J1</accession>
<reference key="1">
    <citation type="journal article" date="2004" name="Proc. Natl. Acad. Sci. U.S.A.">
        <title>Genome sequence of Picrophilus torridus and its implications for life around pH 0.</title>
        <authorList>
            <person name="Fuetterer O."/>
            <person name="Angelov A."/>
            <person name="Liesegang H."/>
            <person name="Gottschalk G."/>
            <person name="Schleper C."/>
            <person name="Schepers B."/>
            <person name="Dock C."/>
            <person name="Antranikian G."/>
            <person name="Liebl W."/>
        </authorList>
    </citation>
    <scope>NUCLEOTIDE SEQUENCE [LARGE SCALE GENOMIC DNA]</scope>
    <source>
        <strain>ATCC 700027 / DSM 9790 / JCM 10055 / NBRC 100828 / KAW 2/3</strain>
    </source>
</reference>
<feature type="chain" id="PRO_0000240264" description="Tyrosine--tRNA ligase">
    <location>
        <begin position="1"/>
        <end position="329"/>
    </location>
</feature>
<feature type="short sequence motif" description="'KMSKS' region">
    <location>
        <begin position="220"/>
        <end position="224"/>
    </location>
</feature>
<feature type="binding site" evidence="1">
    <location>
        <position position="31"/>
    </location>
    <ligand>
        <name>L-tyrosine</name>
        <dbReference type="ChEBI" id="CHEBI:58315"/>
    </ligand>
</feature>
<feature type="binding site" evidence="1">
    <location>
        <position position="157"/>
    </location>
    <ligand>
        <name>L-tyrosine</name>
        <dbReference type="ChEBI" id="CHEBI:58315"/>
    </ligand>
</feature>
<feature type="binding site" evidence="1">
    <location>
        <position position="161"/>
    </location>
    <ligand>
        <name>L-tyrosine</name>
        <dbReference type="ChEBI" id="CHEBI:58315"/>
    </ligand>
</feature>
<feature type="binding site" evidence="1">
    <location>
        <position position="164"/>
    </location>
    <ligand>
        <name>L-tyrosine</name>
        <dbReference type="ChEBI" id="CHEBI:58315"/>
    </ligand>
</feature>
<feature type="binding site" evidence="1">
    <location>
        <position position="179"/>
    </location>
    <ligand>
        <name>L-tyrosine</name>
        <dbReference type="ChEBI" id="CHEBI:58315"/>
    </ligand>
</feature>
<feature type="binding site" evidence="1">
    <location>
        <position position="223"/>
    </location>
    <ligand>
        <name>ATP</name>
        <dbReference type="ChEBI" id="CHEBI:30616"/>
    </ligand>
</feature>
<sequence>MDAIDFVKKNTEEIVTMDEAFKALNNNPKGYIGFEPSGNPHLGTCLLLANKINDMVNAGIKMTVLLADWHAMVNDKLNGDLNEIRKSGELFKRAWLAAGLNSNVKFVWASELVEKSDYWSLLLKVAKNASLLRIRRSLPIMGRSEEDADRDFSKYIYPLMQVTDIFYLDVDFALGGMDQRHAHMLARDIAERMNIKKPVSVHTPLLSSLKGSGRMDSFKKMSKSEPDSAIFMTDSNDDIKRKIKNAYCPMKEVNGNPVIDILKYIIFPYYNDKISIKRPESKGGPVDVDMDSLTRMYISGEIHPVDLKNAVGELLCDIIGPVREKLTGD</sequence>
<keyword id="KW-0030">Aminoacyl-tRNA synthetase</keyword>
<keyword id="KW-0067">ATP-binding</keyword>
<keyword id="KW-0963">Cytoplasm</keyword>
<keyword id="KW-0436">Ligase</keyword>
<keyword id="KW-0547">Nucleotide-binding</keyword>
<keyword id="KW-0648">Protein biosynthesis</keyword>
<dbReference type="EC" id="6.1.1.1" evidence="1"/>
<dbReference type="EMBL" id="AE017261">
    <property type="protein sequence ID" value="AAT42811.1"/>
    <property type="molecule type" value="Genomic_DNA"/>
</dbReference>
<dbReference type="RefSeq" id="WP_011177027.1">
    <property type="nucleotide sequence ID" value="NC_005877.1"/>
</dbReference>
<dbReference type="SMR" id="Q6L2J1"/>
<dbReference type="FunCoup" id="Q6L2J1">
    <property type="interactions" value="197"/>
</dbReference>
<dbReference type="STRING" id="263820.PTO0226"/>
<dbReference type="PaxDb" id="263820-PTO0226"/>
<dbReference type="GeneID" id="2844152"/>
<dbReference type="KEGG" id="pto:PTO0226"/>
<dbReference type="PATRIC" id="fig|263820.9.peg.244"/>
<dbReference type="eggNOG" id="arCOG01886">
    <property type="taxonomic scope" value="Archaea"/>
</dbReference>
<dbReference type="HOGENOM" id="CLU_035267_1_1_2"/>
<dbReference type="InParanoid" id="Q6L2J1"/>
<dbReference type="OrthoDB" id="8389at2157"/>
<dbReference type="Proteomes" id="UP000000438">
    <property type="component" value="Chromosome"/>
</dbReference>
<dbReference type="GO" id="GO:0005737">
    <property type="term" value="C:cytoplasm"/>
    <property type="evidence" value="ECO:0007669"/>
    <property type="project" value="UniProtKB-SubCell"/>
</dbReference>
<dbReference type="GO" id="GO:0005524">
    <property type="term" value="F:ATP binding"/>
    <property type="evidence" value="ECO:0007669"/>
    <property type="project" value="UniProtKB-UniRule"/>
</dbReference>
<dbReference type="GO" id="GO:0004831">
    <property type="term" value="F:tyrosine-tRNA ligase activity"/>
    <property type="evidence" value="ECO:0007669"/>
    <property type="project" value="UniProtKB-UniRule"/>
</dbReference>
<dbReference type="GO" id="GO:0006437">
    <property type="term" value="P:tyrosyl-tRNA aminoacylation"/>
    <property type="evidence" value="ECO:0007669"/>
    <property type="project" value="UniProtKB-UniRule"/>
</dbReference>
<dbReference type="Gene3D" id="3.40.50.620">
    <property type="entry name" value="HUPs"/>
    <property type="match status" value="1"/>
</dbReference>
<dbReference type="Gene3D" id="1.10.240.10">
    <property type="entry name" value="Tyrosyl-Transfer RNA Synthetase"/>
    <property type="match status" value="1"/>
</dbReference>
<dbReference type="HAMAP" id="MF_02009">
    <property type="entry name" value="Tyr_tRNA_synth_type4"/>
    <property type="match status" value="1"/>
</dbReference>
<dbReference type="InterPro" id="IPR002305">
    <property type="entry name" value="aa-tRNA-synth_Ic"/>
</dbReference>
<dbReference type="InterPro" id="IPR014729">
    <property type="entry name" value="Rossmann-like_a/b/a_fold"/>
</dbReference>
<dbReference type="InterPro" id="IPR002307">
    <property type="entry name" value="Tyr-tRNA-ligase"/>
</dbReference>
<dbReference type="InterPro" id="IPR023678">
    <property type="entry name" value="Tyr-tRNA-ligase_4"/>
</dbReference>
<dbReference type="InterPro" id="IPR023617">
    <property type="entry name" value="Tyr-tRNA-ligase_arc/euk-type"/>
</dbReference>
<dbReference type="InterPro" id="IPR050489">
    <property type="entry name" value="Tyr-tRNA_synthase"/>
</dbReference>
<dbReference type="NCBIfam" id="NF006330">
    <property type="entry name" value="PRK08560.1"/>
    <property type="match status" value="1"/>
</dbReference>
<dbReference type="NCBIfam" id="TIGR00234">
    <property type="entry name" value="tyrS"/>
    <property type="match status" value="1"/>
</dbReference>
<dbReference type="PANTHER" id="PTHR46264:SF4">
    <property type="entry name" value="TYROSINE--TRNA LIGASE, CYTOPLASMIC"/>
    <property type="match status" value="1"/>
</dbReference>
<dbReference type="PANTHER" id="PTHR46264">
    <property type="entry name" value="TYROSINE-TRNA LIGASE"/>
    <property type="match status" value="1"/>
</dbReference>
<dbReference type="Pfam" id="PF00579">
    <property type="entry name" value="tRNA-synt_1b"/>
    <property type="match status" value="1"/>
</dbReference>
<dbReference type="PIRSF" id="PIRSF006588">
    <property type="entry name" value="TyrRS_arch_euk"/>
    <property type="match status" value="1"/>
</dbReference>
<dbReference type="PRINTS" id="PR01040">
    <property type="entry name" value="TRNASYNTHTYR"/>
</dbReference>
<dbReference type="SUPFAM" id="SSF52374">
    <property type="entry name" value="Nucleotidylyl transferase"/>
    <property type="match status" value="1"/>
</dbReference>
<dbReference type="PROSITE" id="PS00178">
    <property type="entry name" value="AA_TRNA_LIGASE_I"/>
    <property type="match status" value="1"/>
</dbReference>
<name>SYY_PICTO</name>
<evidence type="ECO:0000255" key="1">
    <source>
        <dbReference type="HAMAP-Rule" id="MF_02009"/>
    </source>
</evidence>
<comment type="function">
    <text evidence="1">Catalyzes the attachment of tyrosine to tRNA(Tyr) in a two-step reaction: tyrosine is first activated by ATP to form Tyr-AMP and then transferred to the acceptor end of tRNA(Tyr).</text>
</comment>
<comment type="catalytic activity">
    <reaction evidence="1">
        <text>tRNA(Tyr) + L-tyrosine + ATP = L-tyrosyl-tRNA(Tyr) + AMP + diphosphate + H(+)</text>
        <dbReference type="Rhea" id="RHEA:10220"/>
        <dbReference type="Rhea" id="RHEA-COMP:9706"/>
        <dbReference type="Rhea" id="RHEA-COMP:9707"/>
        <dbReference type="ChEBI" id="CHEBI:15378"/>
        <dbReference type="ChEBI" id="CHEBI:30616"/>
        <dbReference type="ChEBI" id="CHEBI:33019"/>
        <dbReference type="ChEBI" id="CHEBI:58315"/>
        <dbReference type="ChEBI" id="CHEBI:78442"/>
        <dbReference type="ChEBI" id="CHEBI:78536"/>
        <dbReference type="ChEBI" id="CHEBI:456215"/>
        <dbReference type="EC" id="6.1.1.1"/>
    </reaction>
</comment>
<comment type="subunit">
    <text evidence="1">Homodimer.</text>
</comment>
<comment type="subcellular location">
    <subcellularLocation>
        <location evidence="1">Cytoplasm</location>
    </subcellularLocation>
</comment>
<comment type="similarity">
    <text evidence="1">Belongs to the class-I aminoacyl-tRNA synthetase family. TyrS type 4 subfamily.</text>
</comment>
<proteinExistence type="inferred from homology"/>
<gene>
    <name evidence="1" type="primary">tyrS</name>
    <name type="ordered locus">PTO0226</name>
</gene>
<protein>
    <recommendedName>
        <fullName evidence="1">Tyrosine--tRNA ligase</fullName>
        <ecNumber evidence="1">6.1.1.1</ecNumber>
    </recommendedName>
    <alternativeName>
        <fullName evidence="1">Tyrosyl-tRNA synthetase</fullName>
        <shortName evidence="1">TyrRS</shortName>
    </alternativeName>
</protein>